<feature type="chain" id="PRO_0000050158" description="Exosome complex component Rrp4">
    <location>
        <begin position="1"/>
        <end position="236"/>
    </location>
</feature>
<feature type="domain" description="S1 motif" evidence="1">
    <location>
        <begin position="64"/>
        <end position="133"/>
    </location>
</feature>
<feature type="domain" description="KH" evidence="1">
    <location>
        <begin position="141"/>
        <end position="199"/>
    </location>
</feature>
<dbReference type="EMBL" id="AL445067">
    <property type="protein sequence ID" value="CAC12414.1"/>
    <property type="molecule type" value="Genomic_DNA"/>
</dbReference>
<dbReference type="RefSeq" id="WP_010901697.1">
    <property type="nucleotide sequence ID" value="NC_002578.1"/>
</dbReference>
<dbReference type="PDB" id="8XIE">
    <property type="method" value="X-ray"/>
    <property type="resolution" value="3.50 A"/>
    <property type="chains" value="G/H/I=1-236"/>
</dbReference>
<dbReference type="PDBsum" id="8XIE"/>
<dbReference type="SMR" id="Q9HIP3"/>
<dbReference type="FunCoup" id="Q9HIP3">
    <property type="interactions" value="130"/>
</dbReference>
<dbReference type="STRING" id="273075.gene:9572515"/>
<dbReference type="PaxDb" id="273075-Ta1292"/>
<dbReference type="EnsemblBacteria" id="CAC12414">
    <property type="protein sequence ID" value="CAC12414"/>
    <property type="gene ID" value="CAC12414"/>
</dbReference>
<dbReference type="KEGG" id="tac:Ta1292"/>
<dbReference type="eggNOG" id="arCOG00678">
    <property type="taxonomic scope" value="Archaea"/>
</dbReference>
<dbReference type="HOGENOM" id="CLU_071769_0_0_2"/>
<dbReference type="InParanoid" id="Q9HIP3"/>
<dbReference type="OrthoDB" id="35160at2157"/>
<dbReference type="Proteomes" id="UP000001024">
    <property type="component" value="Chromosome"/>
</dbReference>
<dbReference type="GO" id="GO:0005737">
    <property type="term" value="C:cytoplasm"/>
    <property type="evidence" value="ECO:0007669"/>
    <property type="project" value="UniProtKB-SubCell"/>
</dbReference>
<dbReference type="GO" id="GO:0000178">
    <property type="term" value="C:exosome (RNase complex)"/>
    <property type="evidence" value="ECO:0007669"/>
    <property type="project" value="UniProtKB-KW"/>
</dbReference>
<dbReference type="GO" id="GO:0008143">
    <property type="term" value="F:poly(A) binding"/>
    <property type="evidence" value="ECO:0007669"/>
    <property type="project" value="InterPro"/>
</dbReference>
<dbReference type="GO" id="GO:0071034">
    <property type="term" value="P:CUT catabolic process"/>
    <property type="evidence" value="ECO:0007669"/>
    <property type="project" value="TreeGrafter"/>
</dbReference>
<dbReference type="GO" id="GO:0000467">
    <property type="term" value="P:exonucleolytic trimming to generate mature 3'-end of 5.8S rRNA from tricistronic rRNA transcript (SSU-rRNA, 5.8S rRNA, LSU-rRNA)"/>
    <property type="evidence" value="ECO:0007669"/>
    <property type="project" value="TreeGrafter"/>
</dbReference>
<dbReference type="GO" id="GO:0071051">
    <property type="term" value="P:poly(A)-dependent snoRNA 3'-end processing"/>
    <property type="evidence" value="ECO:0007669"/>
    <property type="project" value="TreeGrafter"/>
</dbReference>
<dbReference type="GO" id="GO:0006401">
    <property type="term" value="P:RNA catabolic process"/>
    <property type="evidence" value="ECO:0007669"/>
    <property type="project" value="UniProtKB-UniRule"/>
</dbReference>
<dbReference type="GO" id="GO:0034475">
    <property type="term" value="P:U4 snRNA 3'-end processing"/>
    <property type="evidence" value="ECO:0007669"/>
    <property type="project" value="TreeGrafter"/>
</dbReference>
<dbReference type="CDD" id="cd22524">
    <property type="entry name" value="KH-I_Rrp4_prokar"/>
    <property type="match status" value="1"/>
</dbReference>
<dbReference type="CDD" id="cd05789">
    <property type="entry name" value="S1_Rrp4"/>
    <property type="match status" value="1"/>
</dbReference>
<dbReference type="Gene3D" id="2.40.50.100">
    <property type="match status" value="1"/>
</dbReference>
<dbReference type="Gene3D" id="3.30.1370.10">
    <property type="entry name" value="K Homology domain, type 1"/>
    <property type="match status" value="1"/>
</dbReference>
<dbReference type="Gene3D" id="2.40.50.140">
    <property type="entry name" value="Nucleic acid-binding proteins"/>
    <property type="match status" value="1"/>
</dbReference>
<dbReference type="HAMAP" id="MF_00623">
    <property type="entry name" value="Exosome_Rrp4"/>
    <property type="match status" value="1"/>
</dbReference>
<dbReference type="InterPro" id="IPR026699">
    <property type="entry name" value="Exosome_RNA_bind1/RRP40/RRP4"/>
</dbReference>
<dbReference type="InterPro" id="IPR004087">
    <property type="entry name" value="KH_dom"/>
</dbReference>
<dbReference type="InterPro" id="IPR004088">
    <property type="entry name" value="KH_dom_type_1"/>
</dbReference>
<dbReference type="InterPro" id="IPR036612">
    <property type="entry name" value="KH_dom_type_1_sf"/>
</dbReference>
<dbReference type="InterPro" id="IPR012340">
    <property type="entry name" value="NA-bd_OB-fold"/>
</dbReference>
<dbReference type="InterPro" id="IPR023474">
    <property type="entry name" value="Rrp4"/>
</dbReference>
<dbReference type="InterPro" id="IPR048565">
    <property type="entry name" value="RRP4_S1"/>
</dbReference>
<dbReference type="InterPro" id="IPR003029">
    <property type="entry name" value="S1_domain"/>
</dbReference>
<dbReference type="NCBIfam" id="NF003181">
    <property type="entry name" value="PRK04163.1-1"/>
    <property type="match status" value="1"/>
</dbReference>
<dbReference type="PANTHER" id="PTHR21321:SF4">
    <property type="entry name" value="EXOSOME COMPLEX COMPONENT RRP4"/>
    <property type="match status" value="1"/>
</dbReference>
<dbReference type="PANTHER" id="PTHR21321">
    <property type="entry name" value="PNAS-3 RELATED"/>
    <property type="match status" value="1"/>
</dbReference>
<dbReference type="Pfam" id="PF00013">
    <property type="entry name" value="KH_1"/>
    <property type="match status" value="1"/>
</dbReference>
<dbReference type="Pfam" id="PF21266">
    <property type="entry name" value="RRP4_S1"/>
    <property type="match status" value="1"/>
</dbReference>
<dbReference type="SMART" id="SM00322">
    <property type="entry name" value="KH"/>
    <property type="match status" value="1"/>
</dbReference>
<dbReference type="SMART" id="SM00316">
    <property type="entry name" value="S1"/>
    <property type="match status" value="1"/>
</dbReference>
<dbReference type="SUPFAM" id="SSF54791">
    <property type="entry name" value="Eukaryotic type KH-domain (KH-domain type I)"/>
    <property type="match status" value="1"/>
</dbReference>
<dbReference type="SUPFAM" id="SSF50249">
    <property type="entry name" value="Nucleic acid-binding proteins"/>
    <property type="match status" value="1"/>
</dbReference>
<dbReference type="SUPFAM" id="SSF110324">
    <property type="entry name" value="Ribosomal L27 protein-like"/>
    <property type="match status" value="1"/>
</dbReference>
<dbReference type="PROSITE" id="PS50084">
    <property type="entry name" value="KH_TYPE_1"/>
    <property type="match status" value="1"/>
</dbReference>
<dbReference type="PROSITE" id="PS50126">
    <property type="entry name" value="S1"/>
    <property type="match status" value="1"/>
</dbReference>
<proteinExistence type="evidence at protein level"/>
<name>RRP4_THEAC</name>
<sequence>MYQLGDVKKIVLPGDPIEVQGKMRNGVYRGQDNRYYSEYFGTLQVNDQFVDVVPFSGQYIPRKGDKVIGKVIEVGPSTWTVDINSPYFAMLHMNDTPWRMSSGDLKRYLNAGDYIYAKIMSVNEIKESWLTLKEPGLKKLEGGHMVLIHASRVPRVIGKGGGMVNMVKELTATRIIIGQNGLIWIDGPIEGVTMAIAAIEMIEREAHTEGLTARVESFLKELKGEKDGSQQNKADQ</sequence>
<reference key="1">
    <citation type="journal article" date="2000" name="Nature">
        <title>The genome sequence of the thermoacidophilic scavenger Thermoplasma acidophilum.</title>
        <authorList>
            <person name="Ruepp A."/>
            <person name="Graml W."/>
            <person name="Santos-Martinez M.-L."/>
            <person name="Koretke K.K."/>
            <person name="Volker C."/>
            <person name="Mewes H.-W."/>
            <person name="Frishman D."/>
            <person name="Stocker S."/>
            <person name="Lupas A.N."/>
            <person name="Baumeister W."/>
        </authorList>
    </citation>
    <scope>NUCLEOTIDE SEQUENCE [LARGE SCALE GENOMIC DNA]</scope>
    <source>
        <strain>ATCC 25905 / DSM 1728 / JCM 9062 / NBRC 15155 / AMRC-C165</strain>
    </source>
</reference>
<protein>
    <recommendedName>
        <fullName evidence="1">Exosome complex component Rrp4</fullName>
    </recommendedName>
</protein>
<comment type="function">
    <text evidence="1">Non-catalytic component of the exosome, which is a complex involved in RNA degradation. Increases the RNA binding and the efficiency of RNA degradation. Confers strong poly(A) specificity to the exosome.</text>
</comment>
<comment type="subunit">
    <text evidence="1">Component of the archaeal exosome complex. Forms a trimer of Rrp4 and/or Csl4 subunits. The trimer associates with a hexameric ring-like arrangement composed of 3 Rrp41-Rrp42 heterodimers.</text>
</comment>
<comment type="subcellular location">
    <subcellularLocation>
        <location evidence="1">Cytoplasm</location>
    </subcellularLocation>
</comment>
<comment type="similarity">
    <text evidence="1">Belongs to the RRP4 family.</text>
</comment>
<keyword id="KW-0002">3D-structure</keyword>
<keyword id="KW-0963">Cytoplasm</keyword>
<keyword id="KW-0271">Exosome</keyword>
<keyword id="KW-1185">Reference proteome</keyword>
<keyword id="KW-0694">RNA-binding</keyword>
<accession>Q9HIP3</accession>
<organism>
    <name type="scientific">Thermoplasma acidophilum (strain ATCC 25905 / DSM 1728 / JCM 9062 / NBRC 15155 / AMRC-C165)</name>
    <dbReference type="NCBI Taxonomy" id="273075"/>
    <lineage>
        <taxon>Archaea</taxon>
        <taxon>Methanobacteriati</taxon>
        <taxon>Thermoplasmatota</taxon>
        <taxon>Thermoplasmata</taxon>
        <taxon>Thermoplasmatales</taxon>
        <taxon>Thermoplasmataceae</taxon>
        <taxon>Thermoplasma</taxon>
    </lineage>
</organism>
<evidence type="ECO:0000255" key="1">
    <source>
        <dbReference type="HAMAP-Rule" id="MF_00623"/>
    </source>
</evidence>
<gene>
    <name evidence="1" type="primary">rrp4</name>
    <name type="ordered locus">Ta1292</name>
</gene>